<proteinExistence type="evidence at protein level"/>
<accession>B0M8U2</accession>
<comment type="function">
    <text evidence="1">FMRFamides and FMRFamide-like peptides are neuropeptides.</text>
</comment>
<comment type="subcellular location">
    <subcellularLocation>
        <location evidence="6">Secreted</location>
    </subcellularLocation>
</comment>
<comment type="similarity">
    <text evidence="2">Belongs to the FARP (FMRF amide related peptide) family.</text>
</comment>
<organism>
    <name type="scientific">Karoophasma botterkloofense</name>
    <name type="common">Gladiator</name>
    <name type="synonym">Heel-walker</name>
    <dbReference type="NCBI Taxonomy" id="253132"/>
    <lineage>
        <taxon>Eukaryota</taxon>
        <taxon>Metazoa</taxon>
        <taxon>Ecdysozoa</taxon>
        <taxon>Arthropoda</taxon>
        <taxon>Hexapoda</taxon>
        <taxon>Insecta</taxon>
        <taxon>Pterygota</taxon>
        <taxon>Neoptera</taxon>
        <taxon>Polyneoptera</taxon>
        <taxon>Mantophasmatodea</taxon>
        <taxon>Austrophasmatidae</taxon>
        <taxon>Karoophasma</taxon>
    </lineage>
</organism>
<name>FAR3_KARBO</name>
<reference evidence="5" key="1">
    <citation type="journal article" date="2012" name="Syst. Biol.">
        <title>Peptidomics-based phylogeny and biogeography of Mantophasmatodea (Hexapoda).</title>
        <authorList>
            <person name="Predel R."/>
            <person name="Neupert S."/>
            <person name="Huetteroth W."/>
            <person name="Kahnt J."/>
            <person name="Waidelich D."/>
            <person name="Roth S."/>
        </authorList>
    </citation>
    <scope>PROTEIN SEQUENCE</scope>
    <scope>AMIDATION AT LEU-9</scope>
    <source>
        <tissue evidence="3">Thoracic perisympathetic organs</tissue>
    </source>
</reference>
<evidence type="ECO:0000250" key="1">
    <source>
        <dbReference type="UniProtKB" id="P34405"/>
    </source>
</evidence>
<evidence type="ECO:0000255" key="2"/>
<evidence type="ECO:0000269" key="3">
    <source>
    </source>
</evidence>
<evidence type="ECO:0000303" key="4">
    <source>
    </source>
</evidence>
<evidence type="ECO:0000305" key="5"/>
<evidence type="ECO:0000305" key="6">
    <source>
    </source>
</evidence>
<sequence length="9" mass="1005">GPDSTFLRL</sequence>
<feature type="peptide" id="PRO_0000421497" description="Extended FMRFamide-3" evidence="3">
    <location>
        <begin position="1"/>
        <end position="9"/>
    </location>
</feature>
<feature type="modified residue" description="Leucine amide" evidence="3">
    <location>
        <position position="9"/>
    </location>
</feature>
<feature type="unsure residue" description="L or I" evidence="3">
    <location>
        <position position="7"/>
    </location>
</feature>
<feature type="unsure residue" description="L or I" evidence="3">
    <location>
        <position position="9"/>
    </location>
</feature>
<dbReference type="GO" id="GO:0005576">
    <property type="term" value="C:extracellular region"/>
    <property type="evidence" value="ECO:0007669"/>
    <property type="project" value="UniProtKB-SubCell"/>
</dbReference>
<dbReference type="GO" id="GO:0007218">
    <property type="term" value="P:neuropeptide signaling pathway"/>
    <property type="evidence" value="ECO:0007669"/>
    <property type="project" value="UniProtKB-KW"/>
</dbReference>
<protein>
    <recommendedName>
        <fullName evidence="4">Extended FMRFamide-3</fullName>
        <shortName evidence="4">FMRFa-3</shortName>
    </recommendedName>
</protein>
<keyword id="KW-0027">Amidation</keyword>
<keyword id="KW-0903">Direct protein sequencing</keyword>
<keyword id="KW-0527">Neuropeptide</keyword>
<keyword id="KW-0964">Secreted</keyword>